<dbReference type="EC" id="2.7.4.25" evidence="1"/>
<dbReference type="EMBL" id="CP001340">
    <property type="protein sequence ID" value="ACL97168.1"/>
    <property type="molecule type" value="Genomic_DNA"/>
</dbReference>
<dbReference type="RefSeq" id="WP_010921417.1">
    <property type="nucleotide sequence ID" value="NC_011916.1"/>
</dbReference>
<dbReference type="RefSeq" id="YP_002519076.1">
    <property type="nucleotide sequence ID" value="NC_011916.1"/>
</dbReference>
<dbReference type="SMR" id="B8H6A7"/>
<dbReference type="GeneID" id="7331897"/>
<dbReference type="KEGG" id="ccs:CCNA_03703"/>
<dbReference type="PATRIC" id="fig|565050.3.peg.3610"/>
<dbReference type="HOGENOM" id="CLU_079959_0_1_5"/>
<dbReference type="OrthoDB" id="9807434at2"/>
<dbReference type="PhylomeDB" id="B8H6A7"/>
<dbReference type="Proteomes" id="UP000001364">
    <property type="component" value="Chromosome"/>
</dbReference>
<dbReference type="GO" id="GO:0005737">
    <property type="term" value="C:cytoplasm"/>
    <property type="evidence" value="ECO:0007669"/>
    <property type="project" value="UniProtKB-SubCell"/>
</dbReference>
<dbReference type="GO" id="GO:0005524">
    <property type="term" value="F:ATP binding"/>
    <property type="evidence" value="ECO:0007669"/>
    <property type="project" value="UniProtKB-UniRule"/>
</dbReference>
<dbReference type="GO" id="GO:0036430">
    <property type="term" value="F:CMP kinase activity"/>
    <property type="evidence" value="ECO:0007669"/>
    <property type="project" value="RHEA"/>
</dbReference>
<dbReference type="GO" id="GO:0036431">
    <property type="term" value="F:dCMP kinase activity"/>
    <property type="evidence" value="ECO:0007669"/>
    <property type="project" value="RHEA"/>
</dbReference>
<dbReference type="GO" id="GO:0006220">
    <property type="term" value="P:pyrimidine nucleotide metabolic process"/>
    <property type="evidence" value="ECO:0007669"/>
    <property type="project" value="UniProtKB-UniRule"/>
</dbReference>
<dbReference type="CDD" id="cd02020">
    <property type="entry name" value="CMPK"/>
    <property type="match status" value="1"/>
</dbReference>
<dbReference type="Gene3D" id="3.40.50.300">
    <property type="entry name" value="P-loop containing nucleotide triphosphate hydrolases"/>
    <property type="match status" value="1"/>
</dbReference>
<dbReference type="HAMAP" id="MF_00238">
    <property type="entry name" value="Cytidyl_kinase_type1"/>
    <property type="match status" value="1"/>
</dbReference>
<dbReference type="InterPro" id="IPR003136">
    <property type="entry name" value="Cytidylate_kin"/>
</dbReference>
<dbReference type="InterPro" id="IPR011994">
    <property type="entry name" value="Cytidylate_kinase_dom"/>
</dbReference>
<dbReference type="InterPro" id="IPR027417">
    <property type="entry name" value="P-loop_NTPase"/>
</dbReference>
<dbReference type="NCBIfam" id="TIGR00017">
    <property type="entry name" value="cmk"/>
    <property type="match status" value="1"/>
</dbReference>
<dbReference type="Pfam" id="PF02224">
    <property type="entry name" value="Cytidylate_kin"/>
    <property type="match status" value="1"/>
</dbReference>
<dbReference type="SUPFAM" id="SSF52540">
    <property type="entry name" value="P-loop containing nucleoside triphosphate hydrolases"/>
    <property type="match status" value="1"/>
</dbReference>
<accession>B8H6A7</accession>
<proteinExistence type="inferred from homology"/>
<protein>
    <recommendedName>
        <fullName evidence="1">Cytidylate kinase</fullName>
        <shortName evidence="1">CK</shortName>
        <ecNumber evidence="1">2.7.4.25</ecNumber>
    </recommendedName>
    <alternativeName>
        <fullName evidence="1">Cytidine monophosphate kinase</fullName>
        <shortName evidence="1">CMP kinase</shortName>
    </alternativeName>
</protein>
<comment type="catalytic activity">
    <reaction evidence="1">
        <text>CMP + ATP = CDP + ADP</text>
        <dbReference type="Rhea" id="RHEA:11600"/>
        <dbReference type="ChEBI" id="CHEBI:30616"/>
        <dbReference type="ChEBI" id="CHEBI:58069"/>
        <dbReference type="ChEBI" id="CHEBI:60377"/>
        <dbReference type="ChEBI" id="CHEBI:456216"/>
        <dbReference type="EC" id="2.7.4.25"/>
    </reaction>
</comment>
<comment type="catalytic activity">
    <reaction evidence="1">
        <text>dCMP + ATP = dCDP + ADP</text>
        <dbReference type="Rhea" id="RHEA:25094"/>
        <dbReference type="ChEBI" id="CHEBI:30616"/>
        <dbReference type="ChEBI" id="CHEBI:57566"/>
        <dbReference type="ChEBI" id="CHEBI:58593"/>
        <dbReference type="ChEBI" id="CHEBI:456216"/>
        <dbReference type="EC" id="2.7.4.25"/>
    </reaction>
</comment>
<comment type="subcellular location">
    <subcellularLocation>
        <location evidence="1">Cytoplasm</location>
    </subcellularLocation>
</comment>
<comment type="similarity">
    <text evidence="1">Belongs to the cytidylate kinase family. Type 1 subfamily.</text>
</comment>
<name>KCY_CAUVN</name>
<reference key="1">
    <citation type="journal article" date="2010" name="J. Bacteriol.">
        <title>The genetic basis of laboratory adaptation in Caulobacter crescentus.</title>
        <authorList>
            <person name="Marks M.E."/>
            <person name="Castro-Rojas C.M."/>
            <person name="Teiling C."/>
            <person name="Du L."/>
            <person name="Kapatral V."/>
            <person name="Walunas T.L."/>
            <person name="Crosson S."/>
        </authorList>
    </citation>
    <scope>NUCLEOTIDE SEQUENCE [LARGE SCALE GENOMIC DNA]</scope>
    <source>
        <strain>NA1000 / CB15N</strain>
    </source>
</reference>
<evidence type="ECO:0000255" key="1">
    <source>
        <dbReference type="HAMAP-Rule" id="MF_00238"/>
    </source>
</evidence>
<gene>
    <name evidence="1" type="primary">cmk</name>
    <name type="ordered locus">CCNA_03703</name>
</gene>
<sequence length="213" mass="22569">MGFVIAVDGPAASGKGTVAGRLAALYGYPLLDTGLLYRAVGVAILDGAGDLDDPIAAEAVARALDLSALDRAEVRTRAAGEAASRCAVHPGVRAALLDLQQTFAAREPGSVIDGRDIGTVIAPHAPAKLYVTARPEVRAERRWKQLVGQGEDVAFEDILADIHKRDARDGGRKDAPMTQAPDAVLLDTSEMTIEQAFDAARRIVEDARARHRL</sequence>
<organism>
    <name type="scientific">Caulobacter vibrioides (strain NA1000 / CB15N)</name>
    <name type="common">Caulobacter crescentus</name>
    <dbReference type="NCBI Taxonomy" id="565050"/>
    <lineage>
        <taxon>Bacteria</taxon>
        <taxon>Pseudomonadati</taxon>
        <taxon>Pseudomonadota</taxon>
        <taxon>Alphaproteobacteria</taxon>
        <taxon>Caulobacterales</taxon>
        <taxon>Caulobacteraceae</taxon>
        <taxon>Caulobacter</taxon>
    </lineage>
</organism>
<feature type="chain" id="PRO_1000125276" description="Cytidylate kinase">
    <location>
        <begin position="1"/>
        <end position="213"/>
    </location>
</feature>
<feature type="binding site" evidence="1">
    <location>
        <begin position="9"/>
        <end position="17"/>
    </location>
    <ligand>
        <name>ATP</name>
        <dbReference type="ChEBI" id="CHEBI:30616"/>
    </ligand>
</feature>
<keyword id="KW-0067">ATP-binding</keyword>
<keyword id="KW-0963">Cytoplasm</keyword>
<keyword id="KW-0418">Kinase</keyword>
<keyword id="KW-0547">Nucleotide-binding</keyword>
<keyword id="KW-1185">Reference proteome</keyword>
<keyword id="KW-0808">Transferase</keyword>